<accession>Q15R04</accession>
<feature type="chain" id="PRO_1000022102" description="Isoleucine--tRNA ligase">
    <location>
        <begin position="1"/>
        <end position="942"/>
    </location>
</feature>
<feature type="short sequence motif" description="'HIGH' region">
    <location>
        <begin position="58"/>
        <end position="68"/>
    </location>
</feature>
<feature type="short sequence motif" description="'KMSKS' region">
    <location>
        <begin position="607"/>
        <end position="611"/>
    </location>
</feature>
<feature type="binding site" evidence="1">
    <location>
        <position position="566"/>
    </location>
    <ligand>
        <name>L-isoleucyl-5'-AMP</name>
        <dbReference type="ChEBI" id="CHEBI:178002"/>
    </ligand>
</feature>
<feature type="binding site" evidence="1">
    <location>
        <position position="610"/>
    </location>
    <ligand>
        <name>ATP</name>
        <dbReference type="ChEBI" id="CHEBI:30616"/>
    </ligand>
</feature>
<feature type="binding site" evidence="1">
    <location>
        <position position="905"/>
    </location>
    <ligand>
        <name>Zn(2+)</name>
        <dbReference type="ChEBI" id="CHEBI:29105"/>
    </ligand>
</feature>
<feature type="binding site" evidence="1">
    <location>
        <position position="908"/>
    </location>
    <ligand>
        <name>Zn(2+)</name>
        <dbReference type="ChEBI" id="CHEBI:29105"/>
    </ligand>
</feature>
<feature type="binding site" evidence="1">
    <location>
        <position position="925"/>
    </location>
    <ligand>
        <name>Zn(2+)</name>
        <dbReference type="ChEBI" id="CHEBI:29105"/>
    </ligand>
</feature>
<feature type="binding site" evidence="1">
    <location>
        <position position="928"/>
    </location>
    <ligand>
        <name>Zn(2+)</name>
        <dbReference type="ChEBI" id="CHEBI:29105"/>
    </ligand>
</feature>
<gene>
    <name evidence="1" type="primary">ileS</name>
    <name type="ordered locus">Patl_3178</name>
</gene>
<sequence length="942" mass="106094">MSDYKHTLNLPETEFPMRGNLAQREPKMLQDWTNKALYHKIRAAKKGKTPFILHDGPPYANGDIHIGHAVNKILKDVIVKSKTLSDFDSPYVPGWDCHGLPIELMVEKKVGKPGKKVTAAEFRQKCRDYAEKQINGQKADFIRLGVLGEWDKPYRTMDFSSEANIIRELGNVVRSGHLEKGFKPVHWCTDCGSALAEAEVEYQDKVSPSIDVRFNIADEASFTKQFTAIGEGLGEGTISVVIWTTTPWTLPANRAVSLHPELEYSLVQVQSENGNERLVVATDLLDECVKRFGFENTHVLGTALGQALENMQVQHPFYDFTVPLILGEHVTTDSGTGCVHTAPGHGVEDFNVGRQYNLEVANPVGANGVYLENTPIFAGEHVFKANEHVVEVLAERGALVHHVKYTHSYPHCWRHKTPLIFRATPQWFISMDKNGLRAASIKEIHKTQWIPEWGESRIESMVAGRPDWCISRQRTWGVPIALFVHKDTGDLHPNTDALIEQVAQRVESEGIQAWWDIDPQEMLGDDADTFVKVLDTLDVWFDSGVSHYFVVDKRDDIPASADLYLEGSDQHRGWFMSSLMTSVATKGHAPYKQVLTHGFTVDGKGKKMSKSLGNTVAPQQVTNKLGADILRLWVASTDYRSEIAVSDEILKRSADAYRRIRNTSRFLLANLTGFNPKTDLVPFEEMVELDKWAVSRAHTMQREIVKAYEAYDLLVVTQKLMQFCSIEMGSFYLDIIKDRQYTAKSDSHARRSCQSALYHIVEALVRWMAPITSFTAQEIWQEMPWQEDEFVFTGTWYTGLTAQADNTEFNDAFWQQVLAVKDEVNRTIELARKEGTIGGSLEAEVKIYATAELAELLSKLQDEARFVFITSSATVEAVESKPADATETEVPGLWLHISASEGKKCARCWHHREDVGTNESHPELCQRCVTNVDGEGETRAYA</sequence>
<organism>
    <name type="scientific">Pseudoalteromonas atlantica (strain T6c / ATCC BAA-1087)</name>
    <dbReference type="NCBI Taxonomy" id="3042615"/>
    <lineage>
        <taxon>Bacteria</taxon>
        <taxon>Pseudomonadati</taxon>
        <taxon>Pseudomonadota</taxon>
        <taxon>Gammaproteobacteria</taxon>
        <taxon>Alteromonadales</taxon>
        <taxon>Alteromonadaceae</taxon>
        <taxon>Paraglaciecola</taxon>
    </lineage>
</organism>
<evidence type="ECO:0000255" key="1">
    <source>
        <dbReference type="HAMAP-Rule" id="MF_02002"/>
    </source>
</evidence>
<proteinExistence type="inferred from homology"/>
<comment type="function">
    <text evidence="1">Catalyzes the attachment of isoleucine to tRNA(Ile). As IleRS can inadvertently accommodate and process structurally similar amino acids such as valine, to avoid such errors it has two additional distinct tRNA(Ile)-dependent editing activities. One activity is designated as 'pretransfer' editing and involves the hydrolysis of activated Val-AMP. The other activity is designated 'posttransfer' editing and involves deacylation of mischarged Val-tRNA(Ile).</text>
</comment>
<comment type="catalytic activity">
    <reaction evidence="1">
        <text>tRNA(Ile) + L-isoleucine + ATP = L-isoleucyl-tRNA(Ile) + AMP + diphosphate</text>
        <dbReference type="Rhea" id="RHEA:11060"/>
        <dbReference type="Rhea" id="RHEA-COMP:9666"/>
        <dbReference type="Rhea" id="RHEA-COMP:9695"/>
        <dbReference type="ChEBI" id="CHEBI:30616"/>
        <dbReference type="ChEBI" id="CHEBI:33019"/>
        <dbReference type="ChEBI" id="CHEBI:58045"/>
        <dbReference type="ChEBI" id="CHEBI:78442"/>
        <dbReference type="ChEBI" id="CHEBI:78528"/>
        <dbReference type="ChEBI" id="CHEBI:456215"/>
        <dbReference type="EC" id="6.1.1.5"/>
    </reaction>
</comment>
<comment type="cofactor">
    <cofactor evidence="1">
        <name>Zn(2+)</name>
        <dbReference type="ChEBI" id="CHEBI:29105"/>
    </cofactor>
    <text evidence="1">Binds 1 zinc ion per subunit.</text>
</comment>
<comment type="subunit">
    <text evidence="1">Monomer.</text>
</comment>
<comment type="subcellular location">
    <subcellularLocation>
        <location evidence="1">Cytoplasm</location>
    </subcellularLocation>
</comment>
<comment type="domain">
    <text evidence="1">IleRS has two distinct active sites: one for aminoacylation and one for editing. The misactivated valine is translocated from the active site to the editing site, which sterically excludes the correctly activated isoleucine. The single editing site contains two valyl binding pockets, one specific for each substrate (Val-AMP or Val-tRNA(Ile)).</text>
</comment>
<comment type="similarity">
    <text evidence="1">Belongs to the class-I aminoacyl-tRNA synthetase family. IleS type 1 subfamily.</text>
</comment>
<reference key="1">
    <citation type="submission" date="2006-06" db="EMBL/GenBank/DDBJ databases">
        <title>Complete sequence of Pseudoalteromonas atlantica T6c.</title>
        <authorList>
            <consortium name="US DOE Joint Genome Institute"/>
            <person name="Copeland A."/>
            <person name="Lucas S."/>
            <person name="Lapidus A."/>
            <person name="Barry K."/>
            <person name="Detter J.C."/>
            <person name="Glavina del Rio T."/>
            <person name="Hammon N."/>
            <person name="Israni S."/>
            <person name="Dalin E."/>
            <person name="Tice H."/>
            <person name="Pitluck S."/>
            <person name="Saunders E."/>
            <person name="Brettin T."/>
            <person name="Bruce D."/>
            <person name="Han C."/>
            <person name="Tapia R."/>
            <person name="Gilna P."/>
            <person name="Schmutz J."/>
            <person name="Larimer F."/>
            <person name="Land M."/>
            <person name="Hauser L."/>
            <person name="Kyrpides N."/>
            <person name="Kim E."/>
            <person name="Karls A.C."/>
            <person name="Bartlett D."/>
            <person name="Higgins B.P."/>
            <person name="Richardson P."/>
        </authorList>
    </citation>
    <scope>NUCLEOTIDE SEQUENCE [LARGE SCALE GENOMIC DNA]</scope>
    <source>
        <strain>T6c / ATCC BAA-1087</strain>
    </source>
</reference>
<dbReference type="EC" id="6.1.1.5" evidence="1"/>
<dbReference type="EMBL" id="CP000388">
    <property type="protein sequence ID" value="ABG41684.1"/>
    <property type="molecule type" value="Genomic_DNA"/>
</dbReference>
<dbReference type="RefSeq" id="WP_011575915.1">
    <property type="nucleotide sequence ID" value="NC_008228.1"/>
</dbReference>
<dbReference type="SMR" id="Q15R04"/>
<dbReference type="STRING" id="342610.Patl_3178"/>
<dbReference type="KEGG" id="pat:Patl_3178"/>
<dbReference type="eggNOG" id="COG0060">
    <property type="taxonomic scope" value="Bacteria"/>
</dbReference>
<dbReference type="HOGENOM" id="CLU_001493_7_1_6"/>
<dbReference type="OrthoDB" id="9810365at2"/>
<dbReference type="Proteomes" id="UP000001981">
    <property type="component" value="Chromosome"/>
</dbReference>
<dbReference type="GO" id="GO:0005829">
    <property type="term" value="C:cytosol"/>
    <property type="evidence" value="ECO:0007669"/>
    <property type="project" value="TreeGrafter"/>
</dbReference>
<dbReference type="GO" id="GO:0002161">
    <property type="term" value="F:aminoacyl-tRNA deacylase activity"/>
    <property type="evidence" value="ECO:0007669"/>
    <property type="project" value="InterPro"/>
</dbReference>
<dbReference type="GO" id="GO:0005524">
    <property type="term" value="F:ATP binding"/>
    <property type="evidence" value="ECO:0007669"/>
    <property type="project" value="UniProtKB-UniRule"/>
</dbReference>
<dbReference type="GO" id="GO:0004822">
    <property type="term" value="F:isoleucine-tRNA ligase activity"/>
    <property type="evidence" value="ECO:0007669"/>
    <property type="project" value="UniProtKB-UniRule"/>
</dbReference>
<dbReference type="GO" id="GO:0000049">
    <property type="term" value="F:tRNA binding"/>
    <property type="evidence" value="ECO:0007669"/>
    <property type="project" value="InterPro"/>
</dbReference>
<dbReference type="GO" id="GO:0008270">
    <property type="term" value="F:zinc ion binding"/>
    <property type="evidence" value="ECO:0007669"/>
    <property type="project" value="UniProtKB-UniRule"/>
</dbReference>
<dbReference type="GO" id="GO:0006428">
    <property type="term" value="P:isoleucyl-tRNA aminoacylation"/>
    <property type="evidence" value="ECO:0007669"/>
    <property type="project" value="UniProtKB-UniRule"/>
</dbReference>
<dbReference type="CDD" id="cd07960">
    <property type="entry name" value="Anticodon_Ia_Ile_BEm"/>
    <property type="match status" value="1"/>
</dbReference>
<dbReference type="FunFam" id="1.10.730.20:FF:000001">
    <property type="entry name" value="Isoleucine--tRNA ligase"/>
    <property type="match status" value="1"/>
</dbReference>
<dbReference type="FunFam" id="3.40.50.620:FF:000048">
    <property type="entry name" value="Isoleucine--tRNA ligase"/>
    <property type="match status" value="1"/>
</dbReference>
<dbReference type="FunFam" id="3.40.50.620:FF:000168">
    <property type="entry name" value="Isoleucine--tRNA ligase"/>
    <property type="match status" value="1"/>
</dbReference>
<dbReference type="FunFam" id="3.90.740.10:FF:000022">
    <property type="entry name" value="Isoleucine--tRNA ligase"/>
    <property type="match status" value="1"/>
</dbReference>
<dbReference type="Gene3D" id="1.10.730.20">
    <property type="match status" value="1"/>
</dbReference>
<dbReference type="Gene3D" id="3.40.50.620">
    <property type="entry name" value="HUPs"/>
    <property type="match status" value="2"/>
</dbReference>
<dbReference type="Gene3D" id="3.90.740.10">
    <property type="entry name" value="Valyl/Leucyl/Isoleucyl-tRNA synthetase, editing domain"/>
    <property type="match status" value="1"/>
</dbReference>
<dbReference type="HAMAP" id="MF_02002">
    <property type="entry name" value="Ile_tRNA_synth_type1"/>
    <property type="match status" value="1"/>
</dbReference>
<dbReference type="InterPro" id="IPR001412">
    <property type="entry name" value="aa-tRNA-synth_I_CS"/>
</dbReference>
<dbReference type="InterPro" id="IPR002300">
    <property type="entry name" value="aa-tRNA-synth_Ia"/>
</dbReference>
<dbReference type="InterPro" id="IPR033708">
    <property type="entry name" value="Anticodon_Ile_BEm"/>
</dbReference>
<dbReference type="InterPro" id="IPR002301">
    <property type="entry name" value="Ile-tRNA-ligase"/>
</dbReference>
<dbReference type="InterPro" id="IPR023585">
    <property type="entry name" value="Ile-tRNA-ligase_type1"/>
</dbReference>
<dbReference type="InterPro" id="IPR050081">
    <property type="entry name" value="Ile-tRNA_ligase"/>
</dbReference>
<dbReference type="InterPro" id="IPR013155">
    <property type="entry name" value="M/V/L/I-tRNA-synth_anticd-bd"/>
</dbReference>
<dbReference type="InterPro" id="IPR014729">
    <property type="entry name" value="Rossmann-like_a/b/a_fold"/>
</dbReference>
<dbReference type="InterPro" id="IPR009080">
    <property type="entry name" value="tRNAsynth_Ia_anticodon-bd"/>
</dbReference>
<dbReference type="InterPro" id="IPR009008">
    <property type="entry name" value="Val/Leu/Ile-tRNA-synth_edit"/>
</dbReference>
<dbReference type="InterPro" id="IPR010663">
    <property type="entry name" value="Znf_FPG/IleRS"/>
</dbReference>
<dbReference type="NCBIfam" id="TIGR00392">
    <property type="entry name" value="ileS"/>
    <property type="match status" value="1"/>
</dbReference>
<dbReference type="PANTHER" id="PTHR42765:SF1">
    <property type="entry name" value="ISOLEUCINE--TRNA LIGASE, MITOCHONDRIAL"/>
    <property type="match status" value="1"/>
</dbReference>
<dbReference type="PANTHER" id="PTHR42765">
    <property type="entry name" value="SOLEUCYL-TRNA SYNTHETASE"/>
    <property type="match status" value="1"/>
</dbReference>
<dbReference type="Pfam" id="PF08264">
    <property type="entry name" value="Anticodon_1"/>
    <property type="match status" value="1"/>
</dbReference>
<dbReference type="Pfam" id="PF00133">
    <property type="entry name" value="tRNA-synt_1"/>
    <property type="match status" value="1"/>
</dbReference>
<dbReference type="Pfam" id="PF06827">
    <property type="entry name" value="zf-FPG_IleRS"/>
    <property type="match status" value="1"/>
</dbReference>
<dbReference type="PRINTS" id="PR00984">
    <property type="entry name" value="TRNASYNTHILE"/>
</dbReference>
<dbReference type="SUPFAM" id="SSF47323">
    <property type="entry name" value="Anticodon-binding domain of a subclass of class I aminoacyl-tRNA synthetases"/>
    <property type="match status" value="1"/>
</dbReference>
<dbReference type="SUPFAM" id="SSF52374">
    <property type="entry name" value="Nucleotidylyl transferase"/>
    <property type="match status" value="1"/>
</dbReference>
<dbReference type="SUPFAM" id="SSF50677">
    <property type="entry name" value="ValRS/IleRS/LeuRS editing domain"/>
    <property type="match status" value="1"/>
</dbReference>
<dbReference type="PROSITE" id="PS00178">
    <property type="entry name" value="AA_TRNA_LIGASE_I"/>
    <property type="match status" value="1"/>
</dbReference>
<protein>
    <recommendedName>
        <fullName evidence="1">Isoleucine--tRNA ligase</fullName>
        <ecNumber evidence="1">6.1.1.5</ecNumber>
    </recommendedName>
    <alternativeName>
        <fullName evidence="1">Isoleucyl-tRNA synthetase</fullName>
        <shortName evidence="1">IleRS</shortName>
    </alternativeName>
</protein>
<name>SYI_PSEA6</name>
<keyword id="KW-0030">Aminoacyl-tRNA synthetase</keyword>
<keyword id="KW-0067">ATP-binding</keyword>
<keyword id="KW-0963">Cytoplasm</keyword>
<keyword id="KW-0436">Ligase</keyword>
<keyword id="KW-0479">Metal-binding</keyword>
<keyword id="KW-0547">Nucleotide-binding</keyword>
<keyword id="KW-0648">Protein biosynthesis</keyword>
<keyword id="KW-0862">Zinc</keyword>